<feature type="chain" id="PRO_0000124391" description="Small ribosomal subunit protein uS7">
    <location>
        <begin position="1"/>
        <end position="205"/>
    </location>
</feature>
<comment type="function">
    <text evidence="1">One of the primary rRNA binding proteins, it binds directly to 16S rRNA where it nucleates assembly of the head domain of the 30S subunit. Is located at the subunit interface close to the decoding center.</text>
</comment>
<comment type="subunit">
    <text>Part of the 30S ribosomal subunit.</text>
</comment>
<comment type="similarity">
    <text evidence="1">Belongs to the universal ribosomal protein uS7 family.</text>
</comment>
<accession>Q9YAU8</accession>
<keyword id="KW-1185">Reference proteome</keyword>
<keyword id="KW-0687">Ribonucleoprotein</keyword>
<keyword id="KW-0689">Ribosomal protein</keyword>
<keyword id="KW-0694">RNA-binding</keyword>
<keyword id="KW-0699">rRNA-binding</keyword>
<organism>
    <name type="scientific">Aeropyrum pernix (strain ATCC 700893 / DSM 11879 / JCM 9820 / NBRC 100138 / K1)</name>
    <dbReference type="NCBI Taxonomy" id="272557"/>
    <lineage>
        <taxon>Archaea</taxon>
        <taxon>Thermoproteota</taxon>
        <taxon>Thermoprotei</taxon>
        <taxon>Desulfurococcales</taxon>
        <taxon>Desulfurococcaceae</taxon>
        <taxon>Aeropyrum</taxon>
    </lineage>
</organism>
<evidence type="ECO:0000255" key="1">
    <source>
        <dbReference type="HAMAP-Rule" id="MF_00480"/>
    </source>
</evidence>
<evidence type="ECO:0000305" key="2"/>
<sequence length="205" mass="23174">MSGQGTGFSLGEGVEVRPDKIRLFGKWSWVGVEVRDPSLKRYINLKPVWLPHTGGRHEKRRFGKAEVPIVERLMNKLMRPGRNGGKKHLAYNIVKTAFDIIYFETGENPIQVLVKAIENSAPREDTTKITYGGITYRVSVDVAPQRRVDQALKFIADGARQCAFNNPKPIEECLAEELILAARGDPRSYAIRQKEEIERIALSSR</sequence>
<dbReference type="EMBL" id="BA000002">
    <property type="protein sequence ID" value="BAA80850.2"/>
    <property type="molecule type" value="Genomic_DNA"/>
</dbReference>
<dbReference type="PIR" id="E72570">
    <property type="entry name" value="E72570"/>
</dbReference>
<dbReference type="RefSeq" id="WP_010866632.1">
    <property type="nucleotide sequence ID" value="NC_000854.2"/>
</dbReference>
<dbReference type="SMR" id="Q9YAU8"/>
<dbReference type="STRING" id="272557.APE_1846.1"/>
<dbReference type="EnsemblBacteria" id="BAA80850">
    <property type="protein sequence ID" value="BAA80850"/>
    <property type="gene ID" value="APE_1846.1"/>
</dbReference>
<dbReference type="GeneID" id="1446284"/>
<dbReference type="KEGG" id="ape:APE_1846.1"/>
<dbReference type="eggNOG" id="arCOG04254">
    <property type="taxonomic scope" value="Archaea"/>
</dbReference>
<dbReference type="Proteomes" id="UP000002518">
    <property type="component" value="Chromosome"/>
</dbReference>
<dbReference type="GO" id="GO:0015935">
    <property type="term" value="C:small ribosomal subunit"/>
    <property type="evidence" value="ECO:0007669"/>
    <property type="project" value="InterPro"/>
</dbReference>
<dbReference type="GO" id="GO:0019843">
    <property type="term" value="F:rRNA binding"/>
    <property type="evidence" value="ECO:0007669"/>
    <property type="project" value="UniProtKB-UniRule"/>
</dbReference>
<dbReference type="GO" id="GO:0003735">
    <property type="term" value="F:structural constituent of ribosome"/>
    <property type="evidence" value="ECO:0007669"/>
    <property type="project" value="InterPro"/>
</dbReference>
<dbReference type="GO" id="GO:0006412">
    <property type="term" value="P:translation"/>
    <property type="evidence" value="ECO:0007669"/>
    <property type="project" value="UniProtKB-UniRule"/>
</dbReference>
<dbReference type="CDD" id="cd14867">
    <property type="entry name" value="uS7_Eukaryote"/>
    <property type="match status" value="1"/>
</dbReference>
<dbReference type="FunFam" id="1.10.455.10:FF:000011">
    <property type="entry name" value="30S ribosomal protein S7"/>
    <property type="match status" value="1"/>
</dbReference>
<dbReference type="Gene3D" id="1.10.455.10">
    <property type="entry name" value="Ribosomal protein S7 domain"/>
    <property type="match status" value="1"/>
</dbReference>
<dbReference type="HAMAP" id="MF_00480_A">
    <property type="entry name" value="Ribosomal_uS7_A"/>
    <property type="match status" value="1"/>
</dbReference>
<dbReference type="InterPro" id="IPR000235">
    <property type="entry name" value="Ribosomal_uS7"/>
</dbReference>
<dbReference type="InterPro" id="IPR026018">
    <property type="entry name" value="Ribosomal_uS7_arc"/>
</dbReference>
<dbReference type="InterPro" id="IPR020606">
    <property type="entry name" value="Ribosomal_uS7_CS"/>
</dbReference>
<dbReference type="InterPro" id="IPR023798">
    <property type="entry name" value="Ribosomal_uS7_dom"/>
</dbReference>
<dbReference type="InterPro" id="IPR036823">
    <property type="entry name" value="Ribosomal_uS7_dom_sf"/>
</dbReference>
<dbReference type="InterPro" id="IPR005716">
    <property type="entry name" value="Ribosomal_uS7_euk/arc"/>
</dbReference>
<dbReference type="NCBIfam" id="NF003106">
    <property type="entry name" value="PRK04027.1"/>
    <property type="match status" value="1"/>
</dbReference>
<dbReference type="NCBIfam" id="TIGR01028">
    <property type="entry name" value="uS7_euk_arch"/>
    <property type="match status" value="1"/>
</dbReference>
<dbReference type="PANTHER" id="PTHR11205">
    <property type="entry name" value="RIBOSOMAL PROTEIN S7"/>
    <property type="match status" value="1"/>
</dbReference>
<dbReference type="Pfam" id="PF00177">
    <property type="entry name" value="Ribosomal_S7"/>
    <property type="match status" value="1"/>
</dbReference>
<dbReference type="PIRSF" id="PIRSF002122">
    <property type="entry name" value="RPS7p_RPS7a_RPS5e_RPS7o"/>
    <property type="match status" value="1"/>
</dbReference>
<dbReference type="SUPFAM" id="SSF47973">
    <property type="entry name" value="Ribosomal protein S7"/>
    <property type="match status" value="1"/>
</dbReference>
<dbReference type="PROSITE" id="PS00052">
    <property type="entry name" value="RIBOSOMAL_S7"/>
    <property type="match status" value="1"/>
</dbReference>
<gene>
    <name evidence="1" type="primary">rps7</name>
    <name type="ordered locus">APE_1846.1</name>
</gene>
<name>RS7_AERPE</name>
<reference key="1">
    <citation type="journal article" date="1999" name="DNA Res.">
        <title>Complete genome sequence of an aerobic hyper-thermophilic crenarchaeon, Aeropyrum pernix K1.</title>
        <authorList>
            <person name="Kawarabayasi Y."/>
            <person name="Hino Y."/>
            <person name="Horikawa H."/>
            <person name="Yamazaki S."/>
            <person name="Haikawa Y."/>
            <person name="Jin-no K."/>
            <person name="Takahashi M."/>
            <person name="Sekine M."/>
            <person name="Baba S."/>
            <person name="Ankai A."/>
            <person name="Kosugi H."/>
            <person name="Hosoyama A."/>
            <person name="Fukui S."/>
            <person name="Nagai Y."/>
            <person name="Nishijima K."/>
            <person name="Nakazawa H."/>
            <person name="Takamiya M."/>
            <person name="Masuda S."/>
            <person name="Funahashi T."/>
            <person name="Tanaka T."/>
            <person name="Kudoh Y."/>
            <person name="Yamazaki J."/>
            <person name="Kushida N."/>
            <person name="Oguchi A."/>
            <person name="Aoki K."/>
            <person name="Kubota K."/>
            <person name="Nakamura Y."/>
            <person name="Nomura N."/>
            <person name="Sako Y."/>
            <person name="Kikuchi H."/>
        </authorList>
    </citation>
    <scope>NUCLEOTIDE SEQUENCE [LARGE SCALE GENOMIC DNA]</scope>
    <source>
        <strain>ATCC 700893 / DSM 11879 / JCM 9820 / NBRC 100138 / K1</strain>
    </source>
</reference>
<protein>
    <recommendedName>
        <fullName evidence="1">Small ribosomal subunit protein uS7</fullName>
    </recommendedName>
    <alternativeName>
        <fullName evidence="2">30S ribosomal protein S7</fullName>
    </alternativeName>
</protein>
<proteinExistence type="inferred from homology"/>